<accession>Q8TW09</accession>
<reference key="1">
    <citation type="journal article" date="2002" name="Proc. Natl. Acad. Sci. U.S.A.">
        <title>The complete genome of hyperthermophile Methanopyrus kandleri AV19 and monophyly of archaeal methanogens.</title>
        <authorList>
            <person name="Slesarev A.I."/>
            <person name="Mezhevaya K.V."/>
            <person name="Makarova K.S."/>
            <person name="Polushin N.N."/>
            <person name="Shcherbinina O.V."/>
            <person name="Shakhova V.V."/>
            <person name="Belova G.I."/>
            <person name="Aravind L."/>
            <person name="Natale D.A."/>
            <person name="Rogozin I.B."/>
            <person name="Tatusov R.L."/>
            <person name="Wolf Y.I."/>
            <person name="Stetter K.O."/>
            <person name="Malykh A.G."/>
            <person name="Koonin E.V."/>
            <person name="Kozyavkin S.A."/>
        </authorList>
    </citation>
    <scope>NUCLEOTIDE SEQUENCE [LARGE SCALE GENOMIC DNA]</scope>
    <source>
        <strain>AV19 / DSM 6324 / JCM 9639 / NBRC 100938</strain>
    </source>
</reference>
<feature type="chain" id="PRO_0000249159" description="Proline--tRNA ligase">
    <location>
        <begin position="1"/>
        <end position="485"/>
    </location>
</feature>
<dbReference type="EC" id="6.1.1.15" evidence="1"/>
<dbReference type="EMBL" id="AE009439">
    <property type="protein sequence ID" value="AAM02442.1"/>
    <property type="molecule type" value="Genomic_DNA"/>
</dbReference>
<dbReference type="SMR" id="Q8TW09"/>
<dbReference type="FunCoup" id="Q8TW09">
    <property type="interactions" value="148"/>
</dbReference>
<dbReference type="STRING" id="190192.MK1229"/>
<dbReference type="PaxDb" id="190192-MK1229"/>
<dbReference type="EnsemblBacteria" id="AAM02442">
    <property type="protein sequence ID" value="AAM02442"/>
    <property type="gene ID" value="MK1229"/>
</dbReference>
<dbReference type="KEGG" id="mka:MK1229"/>
<dbReference type="PATRIC" id="fig|190192.8.peg.1332"/>
<dbReference type="HOGENOM" id="CLU_001882_4_2_2"/>
<dbReference type="InParanoid" id="Q8TW09"/>
<dbReference type="OrthoDB" id="7375at2157"/>
<dbReference type="Proteomes" id="UP000001826">
    <property type="component" value="Chromosome"/>
</dbReference>
<dbReference type="GO" id="GO:0017101">
    <property type="term" value="C:aminoacyl-tRNA synthetase multienzyme complex"/>
    <property type="evidence" value="ECO:0007669"/>
    <property type="project" value="TreeGrafter"/>
</dbReference>
<dbReference type="GO" id="GO:0005737">
    <property type="term" value="C:cytoplasm"/>
    <property type="evidence" value="ECO:0007669"/>
    <property type="project" value="UniProtKB-SubCell"/>
</dbReference>
<dbReference type="GO" id="GO:0005524">
    <property type="term" value="F:ATP binding"/>
    <property type="evidence" value="ECO:0007669"/>
    <property type="project" value="UniProtKB-UniRule"/>
</dbReference>
<dbReference type="GO" id="GO:0004827">
    <property type="term" value="F:proline-tRNA ligase activity"/>
    <property type="evidence" value="ECO:0007669"/>
    <property type="project" value="UniProtKB-UniRule"/>
</dbReference>
<dbReference type="GO" id="GO:0006433">
    <property type="term" value="P:prolyl-tRNA aminoacylation"/>
    <property type="evidence" value="ECO:0007669"/>
    <property type="project" value="UniProtKB-UniRule"/>
</dbReference>
<dbReference type="CDD" id="cd00862">
    <property type="entry name" value="ProRS_anticodon_zinc"/>
    <property type="match status" value="1"/>
</dbReference>
<dbReference type="CDD" id="cd00778">
    <property type="entry name" value="ProRS_core_arch_euk"/>
    <property type="match status" value="1"/>
</dbReference>
<dbReference type="FunFam" id="3.30.930.10:FF:000037">
    <property type="entry name" value="Proline--tRNA ligase"/>
    <property type="match status" value="1"/>
</dbReference>
<dbReference type="Gene3D" id="3.40.50.800">
    <property type="entry name" value="Anticodon-binding domain"/>
    <property type="match status" value="1"/>
</dbReference>
<dbReference type="Gene3D" id="3.30.930.10">
    <property type="entry name" value="Bira Bifunctional Protein, Domain 2"/>
    <property type="match status" value="1"/>
</dbReference>
<dbReference type="Gene3D" id="3.30.110.30">
    <property type="entry name" value="C-terminal domain of ProRS"/>
    <property type="match status" value="1"/>
</dbReference>
<dbReference type="HAMAP" id="MF_01571">
    <property type="entry name" value="Pro_tRNA_synth_type3"/>
    <property type="match status" value="1"/>
</dbReference>
<dbReference type="InterPro" id="IPR002314">
    <property type="entry name" value="aa-tRNA-synt_IIb"/>
</dbReference>
<dbReference type="InterPro" id="IPR006195">
    <property type="entry name" value="aa-tRNA-synth_II"/>
</dbReference>
<dbReference type="InterPro" id="IPR045864">
    <property type="entry name" value="aa-tRNA-synth_II/BPL/LPL"/>
</dbReference>
<dbReference type="InterPro" id="IPR004154">
    <property type="entry name" value="Anticodon-bd"/>
</dbReference>
<dbReference type="InterPro" id="IPR036621">
    <property type="entry name" value="Anticodon-bd_dom_sf"/>
</dbReference>
<dbReference type="InterPro" id="IPR002316">
    <property type="entry name" value="Pro-tRNA-ligase_IIa"/>
</dbReference>
<dbReference type="InterPro" id="IPR004499">
    <property type="entry name" value="Pro-tRNA-ligase_IIa_arc-type"/>
</dbReference>
<dbReference type="InterPro" id="IPR016061">
    <property type="entry name" value="Pro-tRNA_ligase_II_C"/>
</dbReference>
<dbReference type="InterPro" id="IPR017449">
    <property type="entry name" value="Pro-tRNA_synth_II"/>
</dbReference>
<dbReference type="InterPro" id="IPR033721">
    <property type="entry name" value="ProRS_core_arch_euk"/>
</dbReference>
<dbReference type="NCBIfam" id="TIGR00408">
    <property type="entry name" value="proS_fam_I"/>
    <property type="match status" value="1"/>
</dbReference>
<dbReference type="PANTHER" id="PTHR43382:SF2">
    <property type="entry name" value="BIFUNCTIONAL GLUTAMATE_PROLINE--TRNA LIGASE"/>
    <property type="match status" value="1"/>
</dbReference>
<dbReference type="PANTHER" id="PTHR43382">
    <property type="entry name" value="PROLYL-TRNA SYNTHETASE"/>
    <property type="match status" value="1"/>
</dbReference>
<dbReference type="Pfam" id="PF03129">
    <property type="entry name" value="HGTP_anticodon"/>
    <property type="match status" value="1"/>
</dbReference>
<dbReference type="Pfam" id="PF09180">
    <property type="entry name" value="ProRS-C_1"/>
    <property type="match status" value="1"/>
</dbReference>
<dbReference type="Pfam" id="PF00587">
    <property type="entry name" value="tRNA-synt_2b"/>
    <property type="match status" value="1"/>
</dbReference>
<dbReference type="PRINTS" id="PR01046">
    <property type="entry name" value="TRNASYNTHPRO"/>
</dbReference>
<dbReference type="SMART" id="SM00946">
    <property type="entry name" value="ProRS-C_1"/>
    <property type="match status" value="1"/>
</dbReference>
<dbReference type="SUPFAM" id="SSF64586">
    <property type="entry name" value="C-terminal domain of ProRS"/>
    <property type="match status" value="1"/>
</dbReference>
<dbReference type="SUPFAM" id="SSF52954">
    <property type="entry name" value="Class II aaRS ABD-related"/>
    <property type="match status" value="1"/>
</dbReference>
<dbReference type="SUPFAM" id="SSF55681">
    <property type="entry name" value="Class II aaRS and biotin synthetases"/>
    <property type="match status" value="1"/>
</dbReference>
<dbReference type="PROSITE" id="PS50862">
    <property type="entry name" value="AA_TRNA_LIGASE_II"/>
    <property type="match status" value="1"/>
</dbReference>
<organism>
    <name type="scientific">Methanopyrus kandleri (strain AV19 / DSM 6324 / JCM 9639 / NBRC 100938)</name>
    <dbReference type="NCBI Taxonomy" id="190192"/>
    <lineage>
        <taxon>Archaea</taxon>
        <taxon>Methanobacteriati</taxon>
        <taxon>Methanobacteriota</taxon>
        <taxon>Methanomada group</taxon>
        <taxon>Methanopyri</taxon>
        <taxon>Methanopyrales</taxon>
        <taxon>Methanopyraceae</taxon>
        <taxon>Methanopyrus</taxon>
    </lineage>
</organism>
<sequence>MHAFLGNAQLPSTPRGDRLEFSEWYAEVLRSAEIMDVRYPVKGMYVWLPYGFEIRQRVVEKLRRKLRETGHEEVLFPTLIPETQLKKESEHIAGFEDEVYWVTHGGLKELDEKLALRPTSETAIYPMFALWIRSHADLPLKIFQIVNTFRYETKHTRPLIRMREITTFKEAHTAHATEEEAEEQVKEAVEIYSSFFDELGIPYIASVRPEWDKFPGAEYTVAFDTLMPDGRTLQIGTVHMLGQNFARTFEVTYETEEGDQEYVYMTCYGISDRVVASMIAIHGDERGLVLPPDVAPYQVVMVPILKKGVRRKILERAAEVEEMLREEGVRVKVDDRDMSPGRKFHYWELKGVPLRIELGARELEEGTAVVFRRDELERETYAFEELPDVVPELLEDIAMELRKRAREKFEKGIFRTDSPEEARRLVGEGIVETGWCGSERCGVRMEEEFGGDVLGTPYPEEDTEFERCPICGETAEYTVRIAKTY</sequence>
<gene>
    <name evidence="1" type="primary">proS</name>
    <name type="ordered locus">MK1229</name>
</gene>
<evidence type="ECO:0000255" key="1">
    <source>
        <dbReference type="HAMAP-Rule" id="MF_01571"/>
    </source>
</evidence>
<name>SYP_METKA</name>
<comment type="function">
    <text evidence="1">Catalyzes the attachment of proline to tRNA(Pro) in a two-step reaction: proline is first activated by ATP to form Pro-AMP and then transferred to the acceptor end of tRNA(Pro).</text>
</comment>
<comment type="catalytic activity">
    <reaction evidence="1">
        <text>tRNA(Pro) + L-proline + ATP = L-prolyl-tRNA(Pro) + AMP + diphosphate</text>
        <dbReference type="Rhea" id="RHEA:14305"/>
        <dbReference type="Rhea" id="RHEA-COMP:9700"/>
        <dbReference type="Rhea" id="RHEA-COMP:9702"/>
        <dbReference type="ChEBI" id="CHEBI:30616"/>
        <dbReference type="ChEBI" id="CHEBI:33019"/>
        <dbReference type="ChEBI" id="CHEBI:60039"/>
        <dbReference type="ChEBI" id="CHEBI:78442"/>
        <dbReference type="ChEBI" id="CHEBI:78532"/>
        <dbReference type="ChEBI" id="CHEBI:456215"/>
        <dbReference type="EC" id="6.1.1.15"/>
    </reaction>
</comment>
<comment type="subunit">
    <text evidence="1">Homodimer.</text>
</comment>
<comment type="subcellular location">
    <subcellularLocation>
        <location evidence="1">Cytoplasm</location>
    </subcellularLocation>
</comment>
<comment type="domain">
    <text evidence="1">Consists of three domains: the N-terminal catalytic domain, the anticodon-binding domain and the C-terminal extension.</text>
</comment>
<comment type="similarity">
    <text evidence="1">Belongs to the class-II aminoacyl-tRNA synthetase family. ProS type 3 subfamily.</text>
</comment>
<proteinExistence type="inferred from homology"/>
<protein>
    <recommendedName>
        <fullName evidence="1">Proline--tRNA ligase</fullName>
        <ecNumber evidence="1">6.1.1.15</ecNumber>
    </recommendedName>
    <alternativeName>
        <fullName evidence="1">Prolyl-tRNA synthetase</fullName>
        <shortName evidence="1">ProRS</shortName>
    </alternativeName>
</protein>
<keyword id="KW-0030">Aminoacyl-tRNA synthetase</keyword>
<keyword id="KW-0067">ATP-binding</keyword>
<keyword id="KW-0963">Cytoplasm</keyword>
<keyword id="KW-0436">Ligase</keyword>
<keyword id="KW-0547">Nucleotide-binding</keyword>
<keyword id="KW-0648">Protein biosynthesis</keyword>
<keyword id="KW-1185">Reference proteome</keyword>